<name>ASPG2_DROER</name>
<keyword id="KW-1015">Disulfide bond</keyword>
<keyword id="KW-0732">Signal</keyword>
<comment type="similarity">
    <text evidence="3">Belongs to the Ntn-hydrolase family.</text>
</comment>
<sequence length="399" mass="44168">MLAQSCCLRLLILLLLCKSTCSVWEKSHKYFRNRKLRERRIKWFGTKKTEIQPLLISTWNYTDANLQAWSVLQQGPQRTRMAVIQGCMACQNQRCGRLLAGGSSPDSEGTLTLEAAIMDGERLEYGAVAGMEGARNAILVADAVLRHTKHSLLVGKSATKFARSLGYKEEFLTDGRTKNVWKKWRSNGCQPNFWRDVRPSHTENCGPYTPLPEHLHQHPLHQEYAITQGQHDQLAFLALDAEGKLHVASQSSGAPFRIPGRVGDSAVPGAGIYADNKVGGAVASGDGDILMRHLPAFLAVEAMRAGKKPDQAAEWVVQRLLRHNTEFNGAVVVVNRRGIYAAACAGLDEFHFVVSGGKEYLSMARVERIKCLEREDEVVDDGPKGLFPTIPEKQAVPRG</sequence>
<gene>
    <name type="ORF">GG20738</name>
</gene>
<protein>
    <recommendedName>
        <fullName>L-asparaginase-like protein GG20738</fullName>
    </recommendedName>
</protein>
<evidence type="ECO:0000250" key="1"/>
<evidence type="ECO:0000250" key="2">
    <source>
        <dbReference type="UniProtKB" id="P20933"/>
    </source>
</evidence>
<evidence type="ECO:0000255" key="3"/>
<evidence type="ECO:0000312" key="4">
    <source>
        <dbReference type="EMBL" id="EDV55520.1"/>
    </source>
</evidence>
<proteinExistence type="inferred from homology"/>
<dbReference type="EMBL" id="CH954179">
    <property type="protein sequence ID" value="EDV55520.1"/>
    <property type="molecule type" value="Genomic_DNA"/>
</dbReference>
<dbReference type="SMR" id="B3NN96"/>
<dbReference type="EnsemblMetazoa" id="FBtr0140792">
    <property type="protein sequence ID" value="FBpp0139284"/>
    <property type="gene ID" value="FBgn0112925"/>
</dbReference>
<dbReference type="EnsemblMetazoa" id="XM_001975084.3">
    <property type="protein sequence ID" value="XP_001975120.1"/>
    <property type="gene ID" value="LOC6548157"/>
</dbReference>
<dbReference type="GeneID" id="6548157"/>
<dbReference type="KEGG" id="der:6548157"/>
<dbReference type="eggNOG" id="KOG1593">
    <property type="taxonomic scope" value="Eukaryota"/>
</dbReference>
<dbReference type="HOGENOM" id="CLU_021603_0_0_1"/>
<dbReference type="OMA" id="QAVIQGC"/>
<dbReference type="OrthoDB" id="188713at2759"/>
<dbReference type="PhylomeDB" id="B3NN96"/>
<dbReference type="Proteomes" id="UP000008711">
    <property type="component" value="Unassembled WGS sequence"/>
</dbReference>
<dbReference type="GO" id="GO:0005764">
    <property type="term" value="C:lysosome"/>
    <property type="evidence" value="ECO:0007669"/>
    <property type="project" value="TreeGrafter"/>
</dbReference>
<dbReference type="GO" id="GO:0003948">
    <property type="term" value="F:N4-(beta-N-acetylglucosaminyl)-L-asparaginase activity"/>
    <property type="evidence" value="ECO:0007669"/>
    <property type="project" value="TreeGrafter"/>
</dbReference>
<dbReference type="CDD" id="cd04513">
    <property type="entry name" value="Glycosylasparaginase"/>
    <property type="match status" value="1"/>
</dbReference>
<dbReference type="FunFam" id="3.60.20.30:FF:000010">
    <property type="entry name" value="L-asparaginase-like protein GM15681"/>
    <property type="match status" value="1"/>
</dbReference>
<dbReference type="Gene3D" id="3.60.20.30">
    <property type="entry name" value="(Glycosyl)asparaginase"/>
    <property type="match status" value="1"/>
</dbReference>
<dbReference type="InterPro" id="IPR029055">
    <property type="entry name" value="Ntn_hydrolases_N"/>
</dbReference>
<dbReference type="InterPro" id="IPR000246">
    <property type="entry name" value="Peptidase_T2"/>
</dbReference>
<dbReference type="PANTHER" id="PTHR10188">
    <property type="entry name" value="L-ASPARAGINASE"/>
    <property type="match status" value="1"/>
</dbReference>
<dbReference type="PANTHER" id="PTHR10188:SF6">
    <property type="entry name" value="N(4)-(BETA-N-ACETYLGLUCOSAMINYL)-L-ASPARAGINASE"/>
    <property type="match status" value="1"/>
</dbReference>
<dbReference type="Pfam" id="PF01112">
    <property type="entry name" value="Asparaginase_2"/>
    <property type="match status" value="1"/>
</dbReference>
<dbReference type="SUPFAM" id="SSF56235">
    <property type="entry name" value="N-terminal nucleophile aminohydrolases (Ntn hydrolases)"/>
    <property type="match status" value="1"/>
</dbReference>
<accession>B3NN96</accession>
<organism>
    <name type="scientific">Drosophila erecta</name>
    <name type="common">Fruit fly</name>
    <dbReference type="NCBI Taxonomy" id="7220"/>
    <lineage>
        <taxon>Eukaryota</taxon>
        <taxon>Metazoa</taxon>
        <taxon>Ecdysozoa</taxon>
        <taxon>Arthropoda</taxon>
        <taxon>Hexapoda</taxon>
        <taxon>Insecta</taxon>
        <taxon>Pterygota</taxon>
        <taxon>Neoptera</taxon>
        <taxon>Endopterygota</taxon>
        <taxon>Diptera</taxon>
        <taxon>Brachycera</taxon>
        <taxon>Muscomorpha</taxon>
        <taxon>Ephydroidea</taxon>
        <taxon>Drosophilidae</taxon>
        <taxon>Drosophila</taxon>
        <taxon>Sophophora</taxon>
    </lineage>
</organism>
<feature type="signal peptide" evidence="3">
    <location>
        <begin position="1"/>
        <end position="22"/>
    </location>
</feature>
<feature type="chain" id="PRO_0000384142" description="L-asparaginase-like protein GG20738">
    <location>
        <begin position="23"/>
        <end position="399"/>
    </location>
</feature>
<feature type="disulfide bond" evidence="2">
    <location>
        <begin position="90"/>
        <end position="95"/>
    </location>
</feature>
<feature type="disulfide bond" evidence="2">
    <location>
        <begin position="189"/>
        <end position="205"/>
    </location>
</feature>
<feature type="disulfide bond" evidence="1">
    <location>
        <begin position="344"/>
        <end position="371"/>
    </location>
</feature>
<reference evidence="4" key="1">
    <citation type="journal article" date="2007" name="Nature">
        <title>Evolution of genes and genomes on the Drosophila phylogeny.</title>
        <authorList>
            <consortium name="Drosophila 12 genomes consortium"/>
        </authorList>
    </citation>
    <scope>NUCLEOTIDE SEQUENCE [LARGE SCALE GENOMIC DNA]</scope>
    <source>
        <strain evidence="4">Tucson 14021-0224.01</strain>
    </source>
</reference>